<feature type="chain" id="PRO_0000170130" description="4-alpha-glucanotransferase">
    <location>
        <begin position="1"/>
        <end position="505"/>
    </location>
</feature>
<evidence type="ECO:0000305" key="1"/>
<name>MALQ_STRR6</name>
<gene>
    <name type="primary">malQ</name>
    <name type="synonym">malM</name>
    <name type="ordered locus">spr1917</name>
</gene>
<dbReference type="EC" id="2.4.1.25"/>
<dbReference type="EMBL" id="AE007317">
    <property type="protein sequence ID" value="AAL00719.1"/>
    <property type="molecule type" value="Genomic_DNA"/>
</dbReference>
<dbReference type="PIR" id="B98111">
    <property type="entry name" value="B98111"/>
</dbReference>
<dbReference type="RefSeq" id="NP_359508.1">
    <property type="nucleotide sequence ID" value="NC_003098.1"/>
</dbReference>
<dbReference type="RefSeq" id="WP_000747291.1">
    <property type="nucleotide sequence ID" value="NC_003098.1"/>
</dbReference>
<dbReference type="SMR" id="P0A3Q1"/>
<dbReference type="STRING" id="171101.spr1917"/>
<dbReference type="CAZy" id="GH77">
    <property type="family name" value="Glycoside Hydrolase Family 77"/>
</dbReference>
<dbReference type="KEGG" id="spr:spr1917"/>
<dbReference type="PATRIC" id="fig|171101.6.peg.2066"/>
<dbReference type="eggNOG" id="COG1640">
    <property type="taxonomic scope" value="Bacteria"/>
</dbReference>
<dbReference type="HOGENOM" id="CLU_014132_1_0_9"/>
<dbReference type="Proteomes" id="UP000000586">
    <property type="component" value="Chromosome"/>
</dbReference>
<dbReference type="GO" id="GO:0005737">
    <property type="term" value="C:cytoplasm"/>
    <property type="evidence" value="ECO:0007669"/>
    <property type="project" value="UniProtKB-SubCell"/>
</dbReference>
<dbReference type="GO" id="GO:0004134">
    <property type="term" value="F:4-alpha-glucanotransferase activity"/>
    <property type="evidence" value="ECO:0007669"/>
    <property type="project" value="UniProtKB-EC"/>
</dbReference>
<dbReference type="GO" id="GO:0005975">
    <property type="term" value="P:carbohydrate metabolic process"/>
    <property type="evidence" value="ECO:0007669"/>
    <property type="project" value="InterPro"/>
</dbReference>
<dbReference type="Gene3D" id="3.20.20.80">
    <property type="entry name" value="Glycosidases"/>
    <property type="match status" value="1"/>
</dbReference>
<dbReference type="InterPro" id="IPR003385">
    <property type="entry name" value="Glyco_hydro_77"/>
</dbReference>
<dbReference type="InterPro" id="IPR017853">
    <property type="entry name" value="Glycoside_hydrolase_SF"/>
</dbReference>
<dbReference type="NCBIfam" id="TIGR00217">
    <property type="entry name" value="malQ"/>
    <property type="match status" value="1"/>
</dbReference>
<dbReference type="NCBIfam" id="NF011078">
    <property type="entry name" value="PRK14508.1-1"/>
    <property type="match status" value="1"/>
</dbReference>
<dbReference type="NCBIfam" id="NF011080">
    <property type="entry name" value="PRK14508.1-3"/>
    <property type="match status" value="1"/>
</dbReference>
<dbReference type="PANTHER" id="PTHR32438">
    <property type="entry name" value="4-ALPHA-GLUCANOTRANSFERASE DPE1, CHLOROPLASTIC/AMYLOPLASTIC"/>
    <property type="match status" value="1"/>
</dbReference>
<dbReference type="PANTHER" id="PTHR32438:SF5">
    <property type="entry name" value="4-ALPHA-GLUCANOTRANSFERASE DPE1, CHLOROPLASTIC_AMYLOPLASTIC"/>
    <property type="match status" value="1"/>
</dbReference>
<dbReference type="Pfam" id="PF02446">
    <property type="entry name" value="Glyco_hydro_77"/>
    <property type="match status" value="1"/>
</dbReference>
<dbReference type="SUPFAM" id="SSF51445">
    <property type="entry name" value="(Trans)glycosidases"/>
    <property type="match status" value="1"/>
</dbReference>
<keyword id="KW-0119">Carbohydrate metabolism</keyword>
<keyword id="KW-0963">Cytoplasm</keyword>
<keyword id="KW-0328">Glycosyltransferase</keyword>
<keyword id="KW-1185">Reference proteome</keyword>
<keyword id="KW-0808">Transferase</keyword>
<protein>
    <recommendedName>
        <fullName>4-alpha-glucanotransferase</fullName>
        <ecNumber>2.4.1.25</ecNumber>
    </recommendedName>
    <alternativeName>
        <fullName>Amylomaltase</fullName>
    </alternativeName>
    <alternativeName>
        <fullName>Disproportionating enzyme</fullName>
        <shortName>D-enzyme</shortName>
    </alternativeName>
</protein>
<reference key="1">
    <citation type="journal article" date="2001" name="J. Bacteriol.">
        <title>Genome of the bacterium Streptococcus pneumoniae strain R6.</title>
        <authorList>
            <person name="Hoskins J."/>
            <person name="Alborn W.E. Jr."/>
            <person name="Arnold J."/>
            <person name="Blaszczak L.C."/>
            <person name="Burgett S."/>
            <person name="DeHoff B.S."/>
            <person name="Estrem S.T."/>
            <person name="Fritz L."/>
            <person name="Fu D.-J."/>
            <person name="Fuller W."/>
            <person name="Geringer C."/>
            <person name="Gilmour R."/>
            <person name="Glass J.S."/>
            <person name="Khoja H."/>
            <person name="Kraft A.R."/>
            <person name="Lagace R.E."/>
            <person name="LeBlanc D.J."/>
            <person name="Lee L.N."/>
            <person name="Lefkowitz E.J."/>
            <person name="Lu J."/>
            <person name="Matsushima P."/>
            <person name="McAhren S.M."/>
            <person name="McHenney M."/>
            <person name="McLeaster K."/>
            <person name="Mundy C.W."/>
            <person name="Nicas T.I."/>
            <person name="Norris F.H."/>
            <person name="O'Gara M."/>
            <person name="Peery R.B."/>
            <person name="Robertson G.T."/>
            <person name="Rockey P."/>
            <person name="Sun P.-M."/>
            <person name="Winkler M.E."/>
            <person name="Yang Y."/>
            <person name="Young-Bellido M."/>
            <person name="Zhao G."/>
            <person name="Zook C.A."/>
            <person name="Baltz R.H."/>
            <person name="Jaskunas S.R."/>
            <person name="Rosteck P.R. Jr."/>
            <person name="Skatrud P.L."/>
            <person name="Glass J.I."/>
        </authorList>
    </citation>
    <scope>NUCLEOTIDE SEQUENCE [LARGE SCALE GENOMIC DNA]</scope>
    <source>
        <strain>ATCC BAA-255 / R6</strain>
    </source>
</reference>
<accession>P0A3Q1</accession>
<accession>P29851</accession>
<proteinExistence type="inferred from homology"/>
<organism>
    <name type="scientific">Streptococcus pneumoniae (strain ATCC BAA-255 / R6)</name>
    <dbReference type="NCBI Taxonomy" id="171101"/>
    <lineage>
        <taxon>Bacteria</taxon>
        <taxon>Bacillati</taxon>
        <taxon>Bacillota</taxon>
        <taxon>Bacilli</taxon>
        <taxon>Lactobacillales</taxon>
        <taxon>Streptococcaceae</taxon>
        <taxon>Streptococcus</taxon>
    </lineage>
</organism>
<comment type="catalytic activity">
    <reaction>
        <text>Transfers a segment of a (1-&gt;4)-alpha-D-glucan to a new position in an acceptor, which may be glucose or a (1-&gt;4)-alpha-D-glucan.</text>
        <dbReference type="EC" id="2.4.1.25"/>
    </reaction>
</comment>
<comment type="subcellular location">
    <subcellularLocation>
        <location>Cytoplasm</location>
    </subcellularLocation>
</comment>
<comment type="similarity">
    <text evidence="1">Belongs to the disproportionating enzyme family.</text>
</comment>
<sequence>MKKRQSGVLMHISSLPGAYGIGSFGQSAYDFVDFLVRTKQRYWQILPLGATSYGDSPYQSFSAFAGNTHFIDLDILVEQGLLEASDLEGVDFGSDASEVDYAKIYYARRPLLEKAVKRFFEVGDVKDFEKFAQDNQSWLELFAEYMAIKEYFDNLAWTEWPDADARARKASALESYREQLADKLVYHRVTQYFFFQQWLKLKAYANDNHIEIVGDMPIYVAEDSSDMWANPHLFKTDVNGKATCIAGCPPDEFSVTGQLWGNPIYDWEAMDKDGYKWWIERLRESFKIYDIVRIDHFRGFESYWEIPAGSDTAAPGEWVKGPGYKLFAAVKEELGELNIIAEDLGFMTDEVIELRERTGFPGMKILQFAFNPEDESIDSPHLAPANSVMYTGTHDNNTVLGWYRNEIDDATREYMARYTNRKEYETVVHAMLRTVFSSVSFMAIATMQDLLELDEAARMNFPSTLGGNWSWRMTEDQLTPAVEEGLLDLTTIYRRINENLVDLKK</sequence>